<evidence type="ECO:0000255" key="1">
    <source>
        <dbReference type="HAMAP-Rule" id="MF_00011"/>
    </source>
</evidence>
<protein>
    <recommendedName>
        <fullName evidence="1">Adenylosuccinate synthetase</fullName>
        <shortName evidence="1">AMPSase</shortName>
        <shortName evidence="1">AdSS</shortName>
        <ecNumber evidence="1">6.3.4.4</ecNumber>
    </recommendedName>
    <alternativeName>
        <fullName evidence="1">IMP--aspartate ligase</fullName>
    </alternativeName>
</protein>
<accession>B8D1A3</accession>
<proteinExistence type="inferred from homology"/>
<keyword id="KW-0963">Cytoplasm</keyword>
<keyword id="KW-0342">GTP-binding</keyword>
<keyword id="KW-0436">Ligase</keyword>
<keyword id="KW-0460">Magnesium</keyword>
<keyword id="KW-0479">Metal-binding</keyword>
<keyword id="KW-0547">Nucleotide-binding</keyword>
<keyword id="KW-0658">Purine biosynthesis</keyword>
<keyword id="KW-1185">Reference proteome</keyword>
<reference key="1">
    <citation type="journal article" date="2009" name="PLoS ONE">
        <title>Genome analysis of the anaerobic thermohalophilic bacterium Halothermothrix orenii.</title>
        <authorList>
            <person name="Mavromatis K."/>
            <person name="Ivanova N."/>
            <person name="Anderson I."/>
            <person name="Lykidis A."/>
            <person name="Hooper S.D."/>
            <person name="Sun H."/>
            <person name="Kunin V."/>
            <person name="Lapidus A."/>
            <person name="Hugenholtz P."/>
            <person name="Patel B."/>
            <person name="Kyrpides N.C."/>
        </authorList>
    </citation>
    <scope>NUCLEOTIDE SEQUENCE [LARGE SCALE GENOMIC DNA]</scope>
    <source>
        <strain>H 168 / OCM 544 / DSM 9562</strain>
    </source>
</reference>
<gene>
    <name evidence="1" type="primary">purA</name>
    <name type="ordered locus">Hore_23100</name>
</gene>
<comment type="function">
    <text evidence="1">Plays an important role in the de novo pathway of purine nucleotide biosynthesis. Catalyzes the first committed step in the biosynthesis of AMP from IMP.</text>
</comment>
<comment type="catalytic activity">
    <reaction evidence="1">
        <text>IMP + L-aspartate + GTP = N(6)-(1,2-dicarboxyethyl)-AMP + GDP + phosphate + 2 H(+)</text>
        <dbReference type="Rhea" id="RHEA:15753"/>
        <dbReference type="ChEBI" id="CHEBI:15378"/>
        <dbReference type="ChEBI" id="CHEBI:29991"/>
        <dbReference type="ChEBI" id="CHEBI:37565"/>
        <dbReference type="ChEBI" id="CHEBI:43474"/>
        <dbReference type="ChEBI" id="CHEBI:57567"/>
        <dbReference type="ChEBI" id="CHEBI:58053"/>
        <dbReference type="ChEBI" id="CHEBI:58189"/>
        <dbReference type="EC" id="6.3.4.4"/>
    </reaction>
</comment>
<comment type="cofactor">
    <cofactor evidence="1">
        <name>Mg(2+)</name>
        <dbReference type="ChEBI" id="CHEBI:18420"/>
    </cofactor>
    <text evidence="1">Binds 1 Mg(2+) ion per subunit.</text>
</comment>
<comment type="pathway">
    <text evidence="1">Purine metabolism; AMP biosynthesis via de novo pathway; AMP from IMP: step 1/2.</text>
</comment>
<comment type="subunit">
    <text evidence="1">Homodimer.</text>
</comment>
<comment type="subcellular location">
    <subcellularLocation>
        <location evidence="1">Cytoplasm</location>
    </subcellularLocation>
</comment>
<comment type="similarity">
    <text evidence="1">Belongs to the adenylosuccinate synthetase family.</text>
</comment>
<name>PURA_HALOH</name>
<organism>
    <name type="scientific">Halothermothrix orenii (strain H 168 / OCM 544 / DSM 9562)</name>
    <dbReference type="NCBI Taxonomy" id="373903"/>
    <lineage>
        <taxon>Bacteria</taxon>
        <taxon>Bacillati</taxon>
        <taxon>Bacillota</taxon>
        <taxon>Clostridia</taxon>
        <taxon>Halanaerobiales</taxon>
        <taxon>Halothermotrichaceae</taxon>
        <taxon>Halothermothrix</taxon>
    </lineage>
</organism>
<sequence>MGNKVVVGTQWGDEGKGKITDMLARTADVVVRYGGGNNAGHTVIVDGKKFELHLIPSGILYPEKVNVIGNGVVVDPEALVEEMNMLKEEGISLNNLYVSETAHVIMPYHRLLDKLEEKRKGDGKIGTTGRGIGPAYTDKVARRGLRVIDLLDEDTFYEKLKLALDYQNLLLEKVYQVEPMDIKEIMAQYKEYIEVLRPHVTNTSLLLDEAIKEDKKIFFEGAQGTLLDIDYGTYPYVTSSNPTAGGVCTGTGVGPVWIDDVIGVVKAYLTRVGEGPFPTELNNDIGDKLRDKGHEYGVTTGRPRRCGWLDIPILKHAVRVNGLTELALTKLDVLSGLREVKVCTGYRYGDRLIEEFPGNIDILSGCEPVYEVLPGWDDDITGVREYGDLPENARRYVKLIEDMVKVPVTIIGVGPGRKEAIRREKEVN</sequence>
<dbReference type="EC" id="6.3.4.4" evidence="1"/>
<dbReference type="EMBL" id="CP001098">
    <property type="protein sequence ID" value="ACL71055.1"/>
    <property type="molecule type" value="Genomic_DNA"/>
</dbReference>
<dbReference type="RefSeq" id="WP_015924023.1">
    <property type="nucleotide sequence ID" value="NC_011899.1"/>
</dbReference>
<dbReference type="SMR" id="B8D1A3"/>
<dbReference type="STRING" id="373903.Hore_23100"/>
<dbReference type="KEGG" id="hor:Hore_23100"/>
<dbReference type="eggNOG" id="COG0104">
    <property type="taxonomic scope" value="Bacteria"/>
</dbReference>
<dbReference type="HOGENOM" id="CLU_029848_0_0_9"/>
<dbReference type="OrthoDB" id="9807553at2"/>
<dbReference type="UniPathway" id="UPA00075">
    <property type="reaction ID" value="UER00335"/>
</dbReference>
<dbReference type="Proteomes" id="UP000000719">
    <property type="component" value="Chromosome"/>
</dbReference>
<dbReference type="GO" id="GO:0005737">
    <property type="term" value="C:cytoplasm"/>
    <property type="evidence" value="ECO:0007669"/>
    <property type="project" value="UniProtKB-SubCell"/>
</dbReference>
<dbReference type="GO" id="GO:0004019">
    <property type="term" value="F:adenylosuccinate synthase activity"/>
    <property type="evidence" value="ECO:0007669"/>
    <property type="project" value="UniProtKB-UniRule"/>
</dbReference>
<dbReference type="GO" id="GO:0005525">
    <property type="term" value="F:GTP binding"/>
    <property type="evidence" value="ECO:0007669"/>
    <property type="project" value="UniProtKB-UniRule"/>
</dbReference>
<dbReference type="GO" id="GO:0000287">
    <property type="term" value="F:magnesium ion binding"/>
    <property type="evidence" value="ECO:0007669"/>
    <property type="project" value="UniProtKB-UniRule"/>
</dbReference>
<dbReference type="GO" id="GO:0044208">
    <property type="term" value="P:'de novo' AMP biosynthetic process"/>
    <property type="evidence" value="ECO:0007669"/>
    <property type="project" value="UniProtKB-UniRule"/>
</dbReference>
<dbReference type="GO" id="GO:0046040">
    <property type="term" value="P:IMP metabolic process"/>
    <property type="evidence" value="ECO:0007669"/>
    <property type="project" value="TreeGrafter"/>
</dbReference>
<dbReference type="CDD" id="cd03108">
    <property type="entry name" value="AdSS"/>
    <property type="match status" value="1"/>
</dbReference>
<dbReference type="FunFam" id="1.10.300.10:FF:000001">
    <property type="entry name" value="Adenylosuccinate synthetase"/>
    <property type="match status" value="1"/>
</dbReference>
<dbReference type="FunFam" id="3.90.170.10:FF:000001">
    <property type="entry name" value="Adenylosuccinate synthetase"/>
    <property type="match status" value="1"/>
</dbReference>
<dbReference type="Gene3D" id="3.40.440.10">
    <property type="entry name" value="Adenylosuccinate Synthetase, subunit A, domain 1"/>
    <property type="match status" value="1"/>
</dbReference>
<dbReference type="Gene3D" id="1.10.300.10">
    <property type="entry name" value="Adenylosuccinate Synthetase, subunit A, domain 2"/>
    <property type="match status" value="1"/>
</dbReference>
<dbReference type="Gene3D" id="3.90.170.10">
    <property type="entry name" value="Adenylosuccinate Synthetase, subunit A, domain 3"/>
    <property type="match status" value="1"/>
</dbReference>
<dbReference type="HAMAP" id="MF_00011">
    <property type="entry name" value="Adenylosucc_synth"/>
    <property type="match status" value="1"/>
</dbReference>
<dbReference type="InterPro" id="IPR018220">
    <property type="entry name" value="Adenylosuccin_syn_GTP-bd"/>
</dbReference>
<dbReference type="InterPro" id="IPR033128">
    <property type="entry name" value="Adenylosuccin_syn_Lys_AS"/>
</dbReference>
<dbReference type="InterPro" id="IPR042109">
    <property type="entry name" value="Adenylosuccinate_synth_dom1"/>
</dbReference>
<dbReference type="InterPro" id="IPR042110">
    <property type="entry name" value="Adenylosuccinate_synth_dom2"/>
</dbReference>
<dbReference type="InterPro" id="IPR042111">
    <property type="entry name" value="Adenylosuccinate_synth_dom3"/>
</dbReference>
<dbReference type="InterPro" id="IPR001114">
    <property type="entry name" value="Adenylosuccinate_synthetase"/>
</dbReference>
<dbReference type="InterPro" id="IPR027417">
    <property type="entry name" value="P-loop_NTPase"/>
</dbReference>
<dbReference type="NCBIfam" id="NF002223">
    <property type="entry name" value="PRK01117.1"/>
    <property type="match status" value="1"/>
</dbReference>
<dbReference type="NCBIfam" id="TIGR00184">
    <property type="entry name" value="purA"/>
    <property type="match status" value="1"/>
</dbReference>
<dbReference type="PANTHER" id="PTHR11846">
    <property type="entry name" value="ADENYLOSUCCINATE SYNTHETASE"/>
    <property type="match status" value="1"/>
</dbReference>
<dbReference type="PANTHER" id="PTHR11846:SF0">
    <property type="entry name" value="ADENYLOSUCCINATE SYNTHETASE"/>
    <property type="match status" value="1"/>
</dbReference>
<dbReference type="Pfam" id="PF00709">
    <property type="entry name" value="Adenylsucc_synt"/>
    <property type="match status" value="1"/>
</dbReference>
<dbReference type="SMART" id="SM00788">
    <property type="entry name" value="Adenylsucc_synt"/>
    <property type="match status" value="1"/>
</dbReference>
<dbReference type="SUPFAM" id="SSF52540">
    <property type="entry name" value="P-loop containing nucleoside triphosphate hydrolases"/>
    <property type="match status" value="1"/>
</dbReference>
<dbReference type="PROSITE" id="PS01266">
    <property type="entry name" value="ADENYLOSUCCIN_SYN_1"/>
    <property type="match status" value="1"/>
</dbReference>
<dbReference type="PROSITE" id="PS00513">
    <property type="entry name" value="ADENYLOSUCCIN_SYN_2"/>
    <property type="match status" value="1"/>
</dbReference>
<feature type="chain" id="PRO_1000194762" description="Adenylosuccinate synthetase">
    <location>
        <begin position="1"/>
        <end position="428"/>
    </location>
</feature>
<feature type="active site" description="Proton acceptor" evidence="1">
    <location>
        <position position="13"/>
    </location>
</feature>
<feature type="active site" description="Proton donor" evidence="1">
    <location>
        <position position="41"/>
    </location>
</feature>
<feature type="binding site" evidence="1">
    <location>
        <begin position="12"/>
        <end position="18"/>
    </location>
    <ligand>
        <name>GTP</name>
        <dbReference type="ChEBI" id="CHEBI:37565"/>
    </ligand>
</feature>
<feature type="binding site" description="in other chain" evidence="1">
    <location>
        <begin position="13"/>
        <end position="16"/>
    </location>
    <ligand>
        <name>IMP</name>
        <dbReference type="ChEBI" id="CHEBI:58053"/>
        <note>ligand shared between dimeric partners</note>
    </ligand>
</feature>
<feature type="binding site" evidence="1">
    <location>
        <position position="13"/>
    </location>
    <ligand>
        <name>Mg(2+)</name>
        <dbReference type="ChEBI" id="CHEBI:18420"/>
    </ligand>
</feature>
<feature type="binding site" description="in other chain" evidence="1">
    <location>
        <begin position="38"/>
        <end position="41"/>
    </location>
    <ligand>
        <name>IMP</name>
        <dbReference type="ChEBI" id="CHEBI:58053"/>
        <note>ligand shared between dimeric partners</note>
    </ligand>
</feature>
<feature type="binding site" evidence="1">
    <location>
        <begin position="40"/>
        <end position="42"/>
    </location>
    <ligand>
        <name>GTP</name>
        <dbReference type="ChEBI" id="CHEBI:37565"/>
    </ligand>
</feature>
<feature type="binding site" evidence="1">
    <location>
        <position position="40"/>
    </location>
    <ligand>
        <name>Mg(2+)</name>
        <dbReference type="ChEBI" id="CHEBI:18420"/>
    </ligand>
</feature>
<feature type="binding site" description="in other chain" evidence="1">
    <location>
        <position position="128"/>
    </location>
    <ligand>
        <name>IMP</name>
        <dbReference type="ChEBI" id="CHEBI:58053"/>
        <note>ligand shared between dimeric partners</note>
    </ligand>
</feature>
<feature type="binding site" evidence="1">
    <location>
        <position position="142"/>
    </location>
    <ligand>
        <name>IMP</name>
        <dbReference type="ChEBI" id="CHEBI:58053"/>
        <note>ligand shared between dimeric partners</note>
    </ligand>
</feature>
<feature type="binding site" description="in other chain" evidence="1">
    <location>
        <position position="223"/>
    </location>
    <ligand>
        <name>IMP</name>
        <dbReference type="ChEBI" id="CHEBI:58053"/>
        <note>ligand shared between dimeric partners</note>
    </ligand>
</feature>
<feature type="binding site" description="in other chain" evidence="1">
    <location>
        <position position="238"/>
    </location>
    <ligand>
        <name>IMP</name>
        <dbReference type="ChEBI" id="CHEBI:58053"/>
        <note>ligand shared between dimeric partners</note>
    </ligand>
</feature>
<feature type="binding site" evidence="1">
    <location>
        <begin position="298"/>
        <end position="304"/>
    </location>
    <ligand>
        <name>substrate</name>
    </ligand>
</feature>
<feature type="binding site" description="in other chain" evidence="1">
    <location>
        <position position="302"/>
    </location>
    <ligand>
        <name>IMP</name>
        <dbReference type="ChEBI" id="CHEBI:58053"/>
        <note>ligand shared between dimeric partners</note>
    </ligand>
</feature>
<feature type="binding site" evidence="1">
    <location>
        <position position="304"/>
    </location>
    <ligand>
        <name>GTP</name>
        <dbReference type="ChEBI" id="CHEBI:37565"/>
    </ligand>
</feature>
<feature type="binding site" evidence="1">
    <location>
        <begin position="330"/>
        <end position="332"/>
    </location>
    <ligand>
        <name>GTP</name>
        <dbReference type="ChEBI" id="CHEBI:37565"/>
    </ligand>
</feature>
<feature type="binding site" evidence="1">
    <location>
        <begin position="412"/>
        <end position="414"/>
    </location>
    <ligand>
        <name>GTP</name>
        <dbReference type="ChEBI" id="CHEBI:37565"/>
    </ligand>
</feature>